<reference key="1">
    <citation type="journal article" date="2006" name="Nat. Genet.">
        <title>The multidrug-resistant human pathogen Clostridium difficile has a highly mobile, mosaic genome.</title>
        <authorList>
            <person name="Sebaihia M."/>
            <person name="Wren B.W."/>
            <person name="Mullany P."/>
            <person name="Fairweather N.F."/>
            <person name="Minton N."/>
            <person name="Stabler R."/>
            <person name="Thomson N.R."/>
            <person name="Roberts A.P."/>
            <person name="Cerdeno-Tarraga A.M."/>
            <person name="Wang H."/>
            <person name="Holden M.T.G."/>
            <person name="Wright A."/>
            <person name="Churcher C."/>
            <person name="Quail M.A."/>
            <person name="Baker S."/>
            <person name="Bason N."/>
            <person name="Brooks K."/>
            <person name="Chillingworth T."/>
            <person name="Cronin A."/>
            <person name="Davis P."/>
            <person name="Dowd L."/>
            <person name="Fraser A."/>
            <person name="Feltwell T."/>
            <person name="Hance Z."/>
            <person name="Holroyd S."/>
            <person name="Jagels K."/>
            <person name="Moule S."/>
            <person name="Mungall K."/>
            <person name="Price C."/>
            <person name="Rabbinowitsch E."/>
            <person name="Sharp S."/>
            <person name="Simmonds M."/>
            <person name="Stevens K."/>
            <person name="Unwin L."/>
            <person name="Whithead S."/>
            <person name="Dupuy B."/>
            <person name="Dougan G."/>
            <person name="Barrell B."/>
            <person name="Parkhill J."/>
        </authorList>
    </citation>
    <scope>NUCLEOTIDE SEQUENCE [LARGE SCALE GENOMIC DNA]</scope>
    <source>
        <strain>630</strain>
    </source>
</reference>
<dbReference type="EC" id="2.2.1.2" evidence="1"/>
<dbReference type="EMBL" id="AM180355">
    <property type="protein sequence ID" value="CAJ69216.1"/>
    <property type="molecule type" value="Genomic_DNA"/>
</dbReference>
<dbReference type="RefSeq" id="YP_001088844.1">
    <property type="nucleotide sequence ID" value="NC_009089.1"/>
</dbReference>
<dbReference type="SMR" id="Q185K3"/>
<dbReference type="STRING" id="272563.CD630_23290"/>
<dbReference type="EnsemblBacteria" id="CAJ69216">
    <property type="protein sequence ID" value="CAJ69216"/>
    <property type="gene ID" value="CD630_23290"/>
</dbReference>
<dbReference type="KEGG" id="cdf:CD630_23290"/>
<dbReference type="KEGG" id="pdc:CDIF630_02567"/>
<dbReference type="PATRIC" id="fig|272563.120.peg.2460"/>
<dbReference type="eggNOG" id="COG0176">
    <property type="taxonomic scope" value="Bacteria"/>
</dbReference>
<dbReference type="OrthoDB" id="9807051at2"/>
<dbReference type="PhylomeDB" id="Q185K3"/>
<dbReference type="BioCyc" id="PDIF272563:G12WB-2481-MONOMER"/>
<dbReference type="UniPathway" id="UPA00115">
    <property type="reaction ID" value="UER00414"/>
</dbReference>
<dbReference type="Proteomes" id="UP000001978">
    <property type="component" value="Chromosome"/>
</dbReference>
<dbReference type="GO" id="GO:0005737">
    <property type="term" value="C:cytoplasm"/>
    <property type="evidence" value="ECO:0007669"/>
    <property type="project" value="UniProtKB-SubCell"/>
</dbReference>
<dbReference type="GO" id="GO:0016832">
    <property type="term" value="F:aldehyde-lyase activity"/>
    <property type="evidence" value="ECO:0007669"/>
    <property type="project" value="InterPro"/>
</dbReference>
<dbReference type="GO" id="GO:0004801">
    <property type="term" value="F:transaldolase activity"/>
    <property type="evidence" value="ECO:0007669"/>
    <property type="project" value="UniProtKB-UniRule"/>
</dbReference>
<dbReference type="GO" id="GO:0005975">
    <property type="term" value="P:carbohydrate metabolic process"/>
    <property type="evidence" value="ECO:0007669"/>
    <property type="project" value="InterPro"/>
</dbReference>
<dbReference type="GO" id="GO:0006098">
    <property type="term" value="P:pentose-phosphate shunt"/>
    <property type="evidence" value="ECO:0007669"/>
    <property type="project" value="UniProtKB-UniRule"/>
</dbReference>
<dbReference type="CDD" id="cd00956">
    <property type="entry name" value="Transaldolase_FSA"/>
    <property type="match status" value="1"/>
</dbReference>
<dbReference type="FunFam" id="3.20.20.70:FF:000018">
    <property type="entry name" value="Probable transaldolase"/>
    <property type="match status" value="1"/>
</dbReference>
<dbReference type="Gene3D" id="3.20.20.70">
    <property type="entry name" value="Aldolase class I"/>
    <property type="match status" value="1"/>
</dbReference>
<dbReference type="HAMAP" id="MF_00494">
    <property type="entry name" value="Transaldolase_3b"/>
    <property type="match status" value="1"/>
</dbReference>
<dbReference type="InterPro" id="IPR013785">
    <property type="entry name" value="Aldolase_TIM"/>
</dbReference>
<dbReference type="InterPro" id="IPR001585">
    <property type="entry name" value="TAL/FSA"/>
</dbReference>
<dbReference type="InterPro" id="IPR022999">
    <property type="entry name" value="Transaldolase_3B"/>
</dbReference>
<dbReference type="InterPro" id="IPR004731">
    <property type="entry name" value="Transaldolase_3B/F6P_aldolase"/>
</dbReference>
<dbReference type="InterPro" id="IPR018225">
    <property type="entry name" value="Transaldolase_AS"/>
</dbReference>
<dbReference type="InterPro" id="IPR033919">
    <property type="entry name" value="TSA/FSA_arc/bac"/>
</dbReference>
<dbReference type="NCBIfam" id="TIGR00875">
    <property type="entry name" value="fsa_talC_mipB"/>
    <property type="match status" value="1"/>
</dbReference>
<dbReference type="PANTHER" id="PTHR10683">
    <property type="entry name" value="TRANSALDOLASE"/>
    <property type="match status" value="1"/>
</dbReference>
<dbReference type="PANTHER" id="PTHR10683:SF36">
    <property type="entry name" value="TRANSALDOLASE"/>
    <property type="match status" value="1"/>
</dbReference>
<dbReference type="Pfam" id="PF00923">
    <property type="entry name" value="TAL_FSA"/>
    <property type="match status" value="1"/>
</dbReference>
<dbReference type="SUPFAM" id="SSF51569">
    <property type="entry name" value="Aldolase"/>
    <property type="match status" value="1"/>
</dbReference>
<dbReference type="PROSITE" id="PS01054">
    <property type="entry name" value="TRANSALDOLASE_1"/>
    <property type="match status" value="1"/>
</dbReference>
<dbReference type="PROSITE" id="PS00958">
    <property type="entry name" value="TRANSALDOLASE_2"/>
    <property type="match status" value="1"/>
</dbReference>
<accession>Q185K3</accession>
<evidence type="ECO:0000255" key="1">
    <source>
        <dbReference type="HAMAP-Rule" id="MF_00494"/>
    </source>
</evidence>
<organism>
    <name type="scientific">Clostridioides difficile (strain 630)</name>
    <name type="common">Peptoclostridium difficile</name>
    <dbReference type="NCBI Taxonomy" id="272563"/>
    <lineage>
        <taxon>Bacteria</taxon>
        <taxon>Bacillati</taxon>
        <taxon>Bacillota</taxon>
        <taxon>Clostridia</taxon>
        <taxon>Peptostreptococcales</taxon>
        <taxon>Peptostreptococcaceae</taxon>
        <taxon>Clostridioides</taxon>
    </lineage>
</organism>
<comment type="function">
    <text evidence="1">Transaldolase is important for the balance of metabolites in the pentose-phosphate pathway.</text>
</comment>
<comment type="catalytic activity">
    <reaction evidence="1">
        <text>D-sedoheptulose 7-phosphate + D-glyceraldehyde 3-phosphate = D-erythrose 4-phosphate + beta-D-fructose 6-phosphate</text>
        <dbReference type="Rhea" id="RHEA:17053"/>
        <dbReference type="ChEBI" id="CHEBI:16897"/>
        <dbReference type="ChEBI" id="CHEBI:57483"/>
        <dbReference type="ChEBI" id="CHEBI:57634"/>
        <dbReference type="ChEBI" id="CHEBI:59776"/>
        <dbReference type="EC" id="2.2.1.2"/>
    </reaction>
</comment>
<comment type="pathway">
    <text evidence="1">Carbohydrate degradation; pentose phosphate pathway; D-glyceraldehyde 3-phosphate and beta-D-fructose 6-phosphate from D-ribose 5-phosphate and D-xylulose 5-phosphate (non-oxidative stage): step 2/3.</text>
</comment>
<comment type="subcellular location">
    <subcellularLocation>
        <location evidence="1">Cytoplasm</location>
    </subcellularLocation>
</comment>
<comment type="similarity">
    <text evidence="1">Belongs to the transaldolase family. Type 3B subfamily.</text>
</comment>
<proteinExistence type="inferred from homology"/>
<gene>
    <name evidence="1" type="primary">tal</name>
    <name type="ordered locus">CD630_23290</name>
</gene>
<feature type="chain" id="PRO_1000060463" description="Probable transaldolase">
    <location>
        <begin position="1"/>
        <end position="216"/>
    </location>
</feature>
<feature type="active site" description="Schiff-base intermediate with substrate" evidence="1">
    <location>
        <position position="83"/>
    </location>
</feature>
<keyword id="KW-0963">Cytoplasm</keyword>
<keyword id="KW-0570">Pentose shunt</keyword>
<keyword id="KW-1185">Reference proteome</keyword>
<keyword id="KW-0704">Schiff base</keyword>
<keyword id="KW-0808">Transferase</keyword>
<name>TAL_CLOD6</name>
<protein>
    <recommendedName>
        <fullName evidence="1">Probable transaldolase</fullName>
        <ecNumber evidence="1">2.2.1.2</ecNumber>
    </recommendedName>
</protein>
<sequence length="216" mass="23401">MRFFIDTANIEEIKEANDLGVICGVTTNPSLIAKEGRDFIEVVKEISEIVDGPISAEVISLEHKGMIEEAEKLSKIHKNIVIKIPMTAEGLKAVKVLSSKGIKTNVTLIFSAGQALLAARAGATYVSPFVGRLDDISQNGLDLIEEIVDIFSVNSIEAQIIVASVRNPIHVLQAARMGADIATVPLKVINQMIKHPLTDKGIDSFMKDWEGASLKL</sequence>